<evidence type="ECO:0000250" key="1">
    <source>
        <dbReference type="UniProtKB" id="P41493"/>
    </source>
</evidence>
<evidence type="ECO:0000255" key="2"/>
<evidence type="ECO:0000269" key="3">
    <source>
    </source>
</evidence>
<evidence type="ECO:0000303" key="4">
    <source>
    </source>
</evidence>
<evidence type="ECO:0000305" key="5"/>
<proteinExistence type="evidence at protein level"/>
<reference evidence="5" key="1">
    <citation type="journal article" date="2009" name="BMC Evol. Biol.">
        <title>A proteomic approach for studying insect phylogeny: CAPA peptides of ancient insect taxa (Dictyoptera, Blattoptera) as a test case.</title>
        <authorList>
            <person name="Roth S."/>
            <person name="Fromm B."/>
            <person name="Gaede G."/>
            <person name="Predel R."/>
        </authorList>
    </citation>
    <scope>PROTEIN SEQUENCE</scope>
    <scope>AMIDATION AT PHE-11</scope>
    <source>
        <tissue evidence="3">Corpora cardiaca</tissue>
    </source>
</reference>
<feature type="peptide" id="PRO_0000378858" description="Sulfakinin-1" evidence="3">
    <location>
        <begin position="1"/>
        <end position="11"/>
    </location>
</feature>
<feature type="modified residue" description="Sulfotyrosine" evidence="1">
    <location>
        <position position="6"/>
    </location>
</feature>
<feature type="modified residue" description="Phenylalanine amide" evidence="3">
    <location>
        <position position="11"/>
    </location>
</feature>
<name>SK1_APTFU</name>
<comment type="function">
    <text evidence="1">Myotropic peptide.</text>
</comment>
<comment type="subcellular location">
    <subcellularLocation>
        <location evidence="5">Secreted</location>
    </subcellularLocation>
</comment>
<comment type="similarity">
    <text evidence="2">Belongs to the gastrin/cholecystokinin family.</text>
</comment>
<keyword id="KW-0027">Amidation</keyword>
<keyword id="KW-0903">Direct protein sequencing</keyword>
<keyword id="KW-0372">Hormone</keyword>
<keyword id="KW-0527">Neuropeptide</keyword>
<keyword id="KW-0964">Secreted</keyword>
<keyword id="KW-0765">Sulfation</keyword>
<dbReference type="GO" id="GO:0005576">
    <property type="term" value="C:extracellular region"/>
    <property type="evidence" value="ECO:0007669"/>
    <property type="project" value="UniProtKB-SubCell"/>
</dbReference>
<dbReference type="GO" id="GO:0005179">
    <property type="term" value="F:hormone activity"/>
    <property type="evidence" value="ECO:0007669"/>
    <property type="project" value="UniProtKB-KW"/>
</dbReference>
<dbReference type="GO" id="GO:0007218">
    <property type="term" value="P:neuropeptide signaling pathway"/>
    <property type="evidence" value="ECO:0007669"/>
    <property type="project" value="UniProtKB-KW"/>
</dbReference>
<dbReference type="InterPro" id="IPR013152">
    <property type="entry name" value="Gastrin/cholecystokinin_CS"/>
</dbReference>
<dbReference type="InterPro" id="IPR013259">
    <property type="entry name" value="Sulfakinin"/>
</dbReference>
<dbReference type="Pfam" id="PF08257">
    <property type="entry name" value="Sulfakinin"/>
    <property type="match status" value="1"/>
</dbReference>
<dbReference type="PROSITE" id="PS00259">
    <property type="entry name" value="GASTRIN"/>
    <property type="match status" value="1"/>
</dbReference>
<organism>
    <name type="scientific">Aptera fusca</name>
    <name type="common">Cape Mountain cockroach</name>
    <name type="synonym">Giant Table Mountain cockroach</name>
    <dbReference type="NCBI Taxonomy" id="344696"/>
    <lineage>
        <taxon>Eukaryota</taxon>
        <taxon>Metazoa</taxon>
        <taxon>Ecdysozoa</taxon>
        <taxon>Arthropoda</taxon>
        <taxon>Hexapoda</taxon>
        <taxon>Insecta</taxon>
        <taxon>Pterygota</taxon>
        <taxon>Neoptera</taxon>
        <taxon>Polyneoptera</taxon>
        <taxon>Dictyoptera</taxon>
        <taxon>Blattodea</taxon>
        <taxon>Blaberoidea</taxon>
        <taxon>Blaberidae</taxon>
        <taxon>Epilamprinae</taxon>
        <taxon>Aptera</taxon>
    </lineage>
</organism>
<accession>P85534</accession>
<sequence>EQFEDYGHMRF</sequence>
<protein>
    <recommendedName>
        <fullName evidence="4">Sulfakinin-1</fullName>
        <shortName evidence="4">AptFu-SK-1</shortName>
    </recommendedName>
</protein>